<sequence length="1209" mass="134977">MVDVNRFKSMQITLASPNKVRSWSYGEVKKPETINYRTLKPEREGLFDEVIFGPTKDWECACGKYKRIRYKGIVCDRCGVEVTRAKVRRERMGHIELKAPVSHIWYFKGIPSRMGLTLDMSPRALEEVIYFAAYVVIDPKETPLEAKSLLTEREYREKLQEYGSGSFIAKMGAEAIQDLLKRVDLDAEIAELKEELKTASGQKRVKAIRRLDVLDAFQKSGNKPEWMVLNILPVIPPDLRPMLQLDGGRFATSDLNDLYRRVINRNNRLARLLELNAPGIIVQNEKRMLQEAVDALIDNGRRGRPITGPGSRPLKSLSQMLKGKQGRFRQNLLGKRVDFSGRSVIAVGPTLKMYQCGVPREMAIELFKPFVMREIVDRDIVQNVKAAKRLIERGDDRIWDILEEVIKEHPVLLNRAPTLHRLGIQAFEPVLIDGKALRLHPLACEAYNADFDGDQMAIHVPLSEEAQAEARLLMLAAEHILNPKDGKPVVTPSQDMVLGNYYLTMEGADREGEGMVFKDRDEAVMAYRNGYVHLHSRVGIAVDSMPNKPWTDEQRHKIMITTVGKILFNDIMPADLPYLQEPNNANLTDKTPDKYFLAPGSNIQEAIKNLDLNIPFKKKNLGNIIAEIFKRFRTTETSAFLDRLKDLGYYHSTLAGLTVGIADIPVIDNKQEIIDAAHHRVEEISKAFRRGLMTDDDRYEAVTATWRDAKEQLEARLVETQDAKNPIVMMMDSGARGNISNFSQLAGMRGLMAAPNGRIMELPILSNFREGLSVLEMFFSTHGARKGMTDTALKTADSGYLTRRLVDVAQDVIIREDDCGTDRGLTITAITDGKEVTETLEERLVGRYTKKSVRHPETGEIIASPDTLITEDMAHYIAEAGVSEVTIRSVFTCNTRHGVCRHCYGINLATGDAVEVGEAVGTIAAQSIGEPGTQLTMRTFHTGGVASNADITQGLPRIQEIFEARNPKGEAVITEVKGQVTDIEEDAATRTKKVYVKGATGEGEYTVPFTARMKVQVGDEVHRGAPLTEGSIQPKHLLEVRDTLSVETYLLAEVQKVYRSQGVEIGDKHVEVMVRQMLRKVRVMDPGDTGLLPGILMDIADFTDANRDIVIAGGIPATSRPVLMGITKASLETNSFLSAASFQETTRVLTDAAIRGKKDHLLGLKENVIIGKIIPAGTGMARYRNLEPLAVNEIEVIEDSEEQEDTVEE</sequence>
<name>RPOC_STRMU</name>
<organism>
    <name type="scientific">Streptococcus mutans serotype c (strain ATCC 700610 / UA159)</name>
    <dbReference type="NCBI Taxonomy" id="210007"/>
    <lineage>
        <taxon>Bacteria</taxon>
        <taxon>Bacillati</taxon>
        <taxon>Bacillota</taxon>
        <taxon>Bacilli</taxon>
        <taxon>Lactobacillales</taxon>
        <taxon>Streptococcaceae</taxon>
        <taxon>Streptococcus</taxon>
    </lineage>
</organism>
<evidence type="ECO:0000255" key="1">
    <source>
        <dbReference type="HAMAP-Rule" id="MF_01322"/>
    </source>
</evidence>
<evidence type="ECO:0000305" key="2"/>
<dbReference type="EC" id="2.7.7.6" evidence="1"/>
<dbReference type="EMBL" id="AE014133">
    <property type="protein sequence ID" value="AAN59593.1"/>
    <property type="status" value="ALT_INIT"/>
    <property type="molecule type" value="Genomic_DNA"/>
</dbReference>
<dbReference type="RefSeq" id="NP_722287.1">
    <property type="nucleotide sequence ID" value="NC_004350.2"/>
</dbReference>
<dbReference type="RefSeq" id="WP_002263433.1">
    <property type="nucleotide sequence ID" value="NC_004350.2"/>
</dbReference>
<dbReference type="SMR" id="Q8DS47"/>
<dbReference type="STRING" id="210007.SMU_1989"/>
<dbReference type="GeneID" id="93858626"/>
<dbReference type="KEGG" id="smu:SMU_1989"/>
<dbReference type="PATRIC" id="fig|210007.7.peg.1770"/>
<dbReference type="eggNOG" id="COG0086">
    <property type="taxonomic scope" value="Bacteria"/>
</dbReference>
<dbReference type="HOGENOM" id="CLU_000524_3_1_9"/>
<dbReference type="OrthoDB" id="9815296at2"/>
<dbReference type="Proteomes" id="UP000002512">
    <property type="component" value="Chromosome"/>
</dbReference>
<dbReference type="GO" id="GO:0000428">
    <property type="term" value="C:DNA-directed RNA polymerase complex"/>
    <property type="evidence" value="ECO:0007669"/>
    <property type="project" value="UniProtKB-KW"/>
</dbReference>
<dbReference type="GO" id="GO:0003677">
    <property type="term" value="F:DNA binding"/>
    <property type="evidence" value="ECO:0007669"/>
    <property type="project" value="UniProtKB-UniRule"/>
</dbReference>
<dbReference type="GO" id="GO:0003899">
    <property type="term" value="F:DNA-directed RNA polymerase activity"/>
    <property type="evidence" value="ECO:0007669"/>
    <property type="project" value="UniProtKB-UniRule"/>
</dbReference>
<dbReference type="GO" id="GO:0000287">
    <property type="term" value="F:magnesium ion binding"/>
    <property type="evidence" value="ECO:0007669"/>
    <property type="project" value="UniProtKB-UniRule"/>
</dbReference>
<dbReference type="GO" id="GO:0008270">
    <property type="term" value="F:zinc ion binding"/>
    <property type="evidence" value="ECO:0007669"/>
    <property type="project" value="UniProtKB-UniRule"/>
</dbReference>
<dbReference type="GO" id="GO:0006351">
    <property type="term" value="P:DNA-templated transcription"/>
    <property type="evidence" value="ECO:0007669"/>
    <property type="project" value="UniProtKB-UniRule"/>
</dbReference>
<dbReference type="CDD" id="cd02655">
    <property type="entry name" value="RNAP_beta'_C"/>
    <property type="match status" value="1"/>
</dbReference>
<dbReference type="CDD" id="cd01609">
    <property type="entry name" value="RNAP_beta'_N"/>
    <property type="match status" value="1"/>
</dbReference>
<dbReference type="FunFam" id="1.10.150.390:FF:000002">
    <property type="entry name" value="DNA-directed RNA polymerase subunit beta"/>
    <property type="match status" value="1"/>
</dbReference>
<dbReference type="FunFam" id="4.10.860.120:FF:000001">
    <property type="entry name" value="DNA-directed RNA polymerase subunit beta"/>
    <property type="match status" value="1"/>
</dbReference>
<dbReference type="Gene3D" id="1.10.132.30">
    <property type="match status" value="1"/>
</dbReference>
<dbReference type="Gene3D" id="1.10.150.390">
    <property type="match status" value="1"/>
</dbReference>
<dbReference type="Gene3D" id="1.10.1790.20">
    <property type="match status" value="1"/>
</dbReference>
<dbReference type="Gene3D" id="1.10.40.90">
    <property type="match status" value="1"/>
</dbReference>
<dbReference type="Gene3D" id="2.40.40.20">
    <property type="match status" value="1"/>
</dbReference>
<dbReference type="Gene3D" id="2.40.50.100">
    <property type="match status" value="1"/>
</dbReference>
<dbReference type="Gene3D" id="4.10.860.120">
    <property type="entry name" value="RNA polymerase II, clamp domain"/>
    <property type="match status" value="1"/>
</dbReference>
<dbReference type="Gene3D" id="1.10.274.100">
    <property type="entry name" value="RNA polymerase Rpb1, domain 3"/>
    <property type="match status" value="1"/>
</dbReference>
<dbReference type="HAMAP" id="MF_01322">
    <property type="entry name" value="RNApol_bact_RpoC"/>
    <property type="match status" value="1"/>
</dbReference>
<dbReference type="InterPro" id="IPR045867">
    <property type="entry name" value="DNA-dir_RpoC_beta_prime"/>
</dbReference>
<dbReference type="InterPro" id="IPR012754">
    <property type="entry name" value="DNA-dir_RpoC_beta_prime_bact"/>
</dbReference>
<dbReference type="InterPro" id="IPR000722">
    <property type="entry name" value="RNA_pol_asu"/>
</dbReference>
<dbReference type="InterPro" id="IPR006592">
    <property type="entry name" value="RNA_pol_N"/>
</dbReference>
<dbReference type="InterPro" id="IPR007080">
    <property type="entry name" value="RNA_pol_Rpb1_1"/>
</dbReference>
<dbReference type="InterPro" id="IPR007066">
    <property type="entry name" value="RNA_pol_Rpb1_3"/>
</dbReference>
<dbReference type="InterPro" id="IPR042102">
    <property type="entry name" value="RNA_pol_Rpb1_3_sf"/>
</dbReference>
<dbReference type="InterPro" id="IPR007083">
    <property type="entry name" value="RNA_pol_Rpb1_4"/>
</dbReference>
<dbReference type="InterPro" id="IPR007081">
    <property type="entry name" value="RNA_pol_Rpb1_5"/>
</dbReference>
<dbReference type="InterPro" id="IPR044893">
    <property type="entry name" value="RNA_pol_Rpb1_clamp_domain"/>
</dbReference>
<dbReference type="InterPro" id="IPR038120">
    <property type="entry name" value="Rpb1_funnel_sf"/>
</dbReference>
<dbReference type="NCBIfam" id="TIGR02386">
    <property type="entry name" value="rpoC_TIGR"/>
    <property type="match status" value="1"/>
</dbReference>
<dbReference type="PANTHER" id="PTHR19376">
    <property type="entry name" value="DNA-DIRECTED RNA POLYMERASE"/>
    <property type="match status" value="1"/>
</dbReference>
<dbReference type="PANTHER" id="PTHR19376:SF54">
    <property type="entry name" value="DNA-DIRECTED RNA POLYMERASE SUBUNIT BETA"/>
    <property type="match status" value="1"/>
</dbReference>
<dbReference type="Pfam" id="PF04997">
    <property type="entry name" value="RNA_pol_Rpb1_1"/>
    <property type="match status" value="1"/>
</dbReference>
<dbReference type="Pfam" id="PF00623">
    <property type="entry name" value="RNA_pol_Rpb1_2"/>
    <property type="match status" value="2"/>
</dbReference>
<dbReference type="Pfam" id="PF04983">
    <property type="entry name" value="RNA_pol_Rpb1_3"/>
    <property type="match status" value="1"/>
</dbReference>
<dbReference type="Pfam" id="PF05000">
    <property type="entry name" value="RNA_pol_Rpb1_4"/>
    <property type="match status" value="1"/>
</dbReference>
<dbReference type="Pfam" id="PF04998">
    <property type="entry name" value="RNA_pol_Rpb1_5"/>
    <property type="match status" value="1"/>
</dbReference>
<dbReference type="SMART" id="SM00663">
    <property type="entry name" value="RPOLA_N"/>
    <property type="match status" value="1"/>
</dbReference>
<dbReference type="SUPFAM" id="SSF64484">
    <property type="entry name" value="beta and beta-prime subunits of DNA dependent RNA-polymerase"/>
    <property type="match status" value="1"/>
</dbReference>
<keyword id="KW-0240">DNA-directed RNA polymerase</keyword>
<keyword id="KW-0460">Magnesium</keyword>
<keyword id="KW-0479">Metal-binding</keyword>
<keyword id="KW-0548">Nucleotidyltransferase</keyword>
<keyword id="KW-1185">Reference proteome</keyword>
<keyword id="KW-0804">Transcription</keyword>
<keyword id="KW-0808">Transferase</keyword>
<keyword id="KW-0862">Zinc</keyword>
<accession>Q8DS47</accession>
<feature type="chain" id="PRO_0000067807" description="DNA-directed RNA polymerase subunit beta'">
    <location>
        <begin position="1"/>
        <end position="1209"/>
    </location>
</feature>
<feature type="binding site" evidence="1">
    <location>
        <position position="60"/>
    </location>
    <ligand>
        <name>Zn(2+)</name>
        <dbReference type="ChEBI" id="CHEBI:29105"/>
        <label>1</label>
    </ligand>
</feature>
<feature type="binding site" evidence="1">
    <location>
        <position position="62"/>
    </location>
    <ligand>
        <name>Zn(2+)</name>
        <dbReference type="ChEBI" id="CHEBI:29105"/>
        <label>1</label>
    </ligand>
</feature>
<feature type="binding site" evidence="1">
    <location>
        <position position="75"/>
    </location>
    <ligand>
        <name>Zn(2+)</name>
        <dbReference type="ChEBI" id="CHEBI:29105"/>
        <label>1</label>
    </ligand>
</feature>
<feature type="binding site" evidence="1">
    <location>
        <position position="78"/>
    </location>
    <ligand>
        <name>Zn(2+)</name>
        <dbReference type="ChEBI" id="CHEBI:29105"/>
        <label>1</label>
    </ligand>
</feature>
<feature type="binding site" evidence="1">
    <location>
        <position position="450"/>
    </location>
    <ligand>
        <name>Mg(2+)</name>
        <dbReference type="ChEBI" id="CHEBI:18420"/>
    </ligand>
</feature>
<feature type="binding site" evidence="1">
    <location>
        <position position="452"/>
    </location>
    <ligand>
        <name>Mg(2+)</name>
        <dbReference type="ChEBI" id="CHEBI:18420"/>
    </ligand>
</feature>
<feature type="binding site" evidence="1">
    <location>
        <position position="454"/>
    </location>
    <ligand>
        <name>Mg(2+)</name>
        <dbReference type="ChEBI" id="CHEBI:18420"/>
    </ligand>
</feature>
<feature type="binding site" evidence="1">
    <location>
        <position position="819"/>
    </location>
    <ligand>
        <name>Zn(2+)</name>
        <dbReference type="ChEBI" id="CHEBI:29105"/>
        <label>2</label>
    </ligand>
</feature>
<feature type="binding site" evidence="1">
    <location>
        <position position="893"/>
    </location>
    <ligand>
        <name>Zn(2+)</name>
        <dbReference type="ChEBI" id="CHEBI:29105"/>
        <label>2</label>
    </ligand>
</feature>
<feature type="binding site" evidence="1">
    <location>
        <position position="900"/>
    </location>
    <ligand>
        <name>Zn(2+)</name>
        <dbReference type="ChEBI" id="CHEBI:29105"/>
        <label>2</label>
    </ligand>
</feature>
<feature type="binding site" evidence="1">
    <location>
        <position position="903"/>
    </location>
    <ligand>
        <name>Zn(2+)</name>
        <dbReference type="ChEBI" id="CHEBI:29105"/>
        <label>2</label>
    </ligand>
</feature>
<proteinExistence type="inferred from homology"/>
<gene>
    <name evidence="1" type="primary">rpoC</name>
    <name type="ordered locus">SMU_1989</name>
</gene>
<comment type="function">
    <text evidence="1">DNA-dependent RNA polymerase catalyzes the transcription of DNA into RNA using the four ribonucleoside triphosphates as substrates.</text>
</comment>
<comment type="catalytic activity">
    <reaction evidence="1">
        <text>RNA(n) + a ribonucleoside 5'-triphosphate = RNA(n+1) + diphosphate</text>
        <dbReference type="Rhea" id="RHEA:21248"/>
        <dbReference type="Rhea" id="RHEA-COMP:14527"/>
        <dbReference type="Rhea" id="RHEA-COMP:17342"/>
        <dbReference type="ChEBI" id="CHEBI:33019"/>
        <dbReference type="ChEBI" id="CHEBI:61557"/>
        <dbReference type="ChEBI" id="CHEBI:140395"/>
        <dbReference type="EC" id="2.7.7.6"/>
    </reaction>
</comment>
<comment type="cofactor">
    <cofactor evidence="1">
        <name>Mg(2+)</name>
        <dbReference type="ChEBI" id="CHEBI:18420"/>
    </cofactor>
    <text evidence="1">Binds 1 Mg(2+) ion per subunit.</text>
</comment>
<comment type="cofactor">
    <cofactor evidence="1">
        <name>Zn(2+)</name>
        <dbReference type="ChEBI" id="CHEBI:29105"/>
    </cofactor>
    <text evidence="1">Binds 2 Zn(2+) ions per subunit.</text>
</comment>
<comment type="subunit">
    <text evidence="1">The RNAP catalytic core consists of 2 alpha, 1 beta, 1 beta' and 1 omega subunit. When a sigma factor is associated with the core the holoenzyme is formed, which can initiate transcription.</text>
</comment>
<comment type="similarity">
    <text evidence="1">Belongs to the RNA polymerase beta' chain family.</text>
</comment>
<comment type="sequence caution" evidence="2">
    <conflict type="erroneous initiation">
        <sequence resource="EMBL-CDS" id="AAN59593"/>
    </conflict>
    <text>Extended N-terminus.</text>
</comment>
<reference key="1">
    <citation type="journal article" date="2002" name="Proc. Natl. Acad. Sci. U.S.A.">
        <title>Genome sequence of Streptococcus mutans UA159, a cariogenic dental pathogen.</title>
        <authorList>
            <person name="Ajdic D.J."/>
            <person name="McShan W.M."/>
            <person name="McLaughlin R.E."/>
            <person name="Savic G."/>
            <person name="Chang J."/>
            <person name="Carson M.B."/>
            <person name="Primeaux C."/>
            <person name="Tian R."/>
            <person name="Kenton S."/>
            <person name="Jia H.G."/>
            <person name="Lin S.P."/>
            <person name="Qian Y."/>
            <person name="Li S."/>
            <person name="Zhu H."/>
            <person name="Najar F.Z."/>
            <person name="Lai H."/>
            <person name="White J."/>
            <person name="Roe B.A."/>
            <person name="Ferretti J.J."/>
        </authorList>
    </citation>
    <scope>NUCLEOTIDE SEQUENCE [LARGE SCALE GENOMIC DNA]</scope>
    <source>
        <strain>ATCC 700610 / UA159</strain>
    </source>
</reference>
<protein>
    <recommendedName>
        <fullName evidence="1">DNA-directed RNA polymerase subunit beta'</fullName>
        <shortName evidence="1">RNAP subunit beta'</shortName>
        <ecNumber evidence="1">2.7.7.6</ecNumber>
    </recommendedName>
    <alternativeName>
        <fullName evidence="1">RNA polymerase subunit beta'</fullName>
    </alternativeName>
    <alternativeName>
        <fullName evidence="1">Transcriptase subunit beta'</fullName>
    </alternativeName>
</protein>